<comment type="function">
    <text evidence="1">Forms part of the ribosomal stalk which helps the ribosome interact with GTP-bound translation factors.</text>
</comment>
<comment type="subunit">
    <text evidence="1">Part of the ribosomal stalk of the 50S ribosomal subunit. Interacts with L10 and the large rRNA to form the base of the stalk. L10 forms an elongated spine to which L12 dimers bind in a sequential fashion forming a multimeric L10(L12)X complex.</text>
</comment>
<comment type="PTM">
    <text evidence="1">One or more lysine residues are methylated.</text>
</comment>
<comment type="similarity">
    <text evidence="1">Belongs to the universal ribosomal protein uL11 family.</text>
</comment>
<sequence>MAKKVSAKIKLALPAGKANPAPPVGPALGQHGVNIMMFCKEYNARTADQVGMVIPVEITVFEDRSFTFVLKTPPASVLLTKAAGVEKGSGKPNKEKAGTITGAQLRQIAEQKLPDLNANDVEAAMKIIAGTARNMGIVIAD</sequence>
<gene>
    <name evidence="1" type="primary">rplK</name>
    <name evidence="1" type="synonym">rpl11</name>
    <name type="ordered locus">glr1599</name>
</gene>
<name>RL11_GLOVI</name>
<accession>P60102</accession>
<proteinExistence type="inferred from homology"/>
<keyword id="KW-0488">Methylation</keyword>
<keyword id="KW-1185">Reference proteome</keyword>
<keyword id="KW-0687">Ribonucleoprotein</keyword>
<keyword id="KW-0689">Ribosomal protein</keyword>
<keyword id="KW-0694">RNA-binding</keyword>
<keyword id="KW-0699">rRNA-binding</keyword>
<organism>
    <name type="scientific">Gloeobacter violaceus (strain ATCC 29082 / PCC 7421)</name>
    <dbReference type="NCBI Taxonomy" id="251221"/>
    <lineage>
        <taxon>Bacteria</taxon>
        <taxon>Bacillati</taxon>
        <taxon>Cyanobacteriota</taxon>
        <taxon>Cyanophyceae</taxon>
        <taxon>Gloeobacterales</taxon>
        <taxon>Gloeobacteraceae</taxon>
        <taxon>Gloeobacter</taxon>
    </lineage>
</organism>
<evidence type="ECO:0000255" key="1">
    <source>
        <dbReference type="HAMAP-Rule" id="MF_00736"/>
    </source>
</evidence>
<evidence type="ECO:0000305" key="2"/>
<protein>
    <recommendedName>
        <fullName evidence="1">Large ribosomal subunit protein uL11</fullName>
    </recommendedName>
    <alternativeName>
        <fullName evidence="2">50S ribosomal protein L11</fullName>
    </alternativeName>
</protein>
<dbReference type="EMBL" id="BA000045">
    <property type="protein sequence ID" value="BAC89540.1"/>
    <property type="molecule type" value="Genomic_DNA"/>
</dbReference>
<dbReference type="RefSeq" id="NP_924545.1">
    <property type="nucleotide sequence ID" value="NC_005125.1"/>
</dbReference>
<dbReference type="RefSeq" id="WP_011141598.1">
    <property type="nucleotide sequence ID" value="NC_005125.1"/>
</dbReference>
<dbReference type="SMR" id="P60102"/>
<dbReference type="FunCoup" id="P60102">
    <property type="interactions" value="401"/>
</dbReference>
<dbReference type="STRING" id="251221.gene:10759089"/>
<dbReference type="EnsemblBacteria" id="BAC89540">
    <property type="protein sequence ID" value="BAC89540"/>
    <property type="gene ID" value="BAC89540"/>
</dbReference>
<dbReference type="KEGG" id="gvi:glr1599"/>
<dbReference type="PATRIC" id="fig|251221.4.peg.1637"/>
<dbReference type="eggNOG" id="COG0080">
    <property type="taxonomic scope" value="Bacteria"/>
</dbReference>
<dbReference type="HOGENOM" id="CLU_074237_2_2_3"/>
<dbReference type="InParanoid" id="P60102"/>
<dbReference type="OrthoDB" id="9802408at2"/>
<dbReference type="PhylomeDB" id="P60102"/>
<dbReference type="Proteomes" id="UP000000557">
    <property type="component" value="Chromosome"/>
</dbReference>
<dbReference type="GO" id="GO:0022625">
    <property type="term" value="C:cytosolic large ribosomal subunit"/>
    <property type="evidence" value="ECO:0000318"/>
    <property type="project" value="GO_Central"/>
</dbReference>
<dbReference type="GO" id="GO:0070180">
    <property type="term" value="F:large ribosomal subunit rRNA binding"/>
    <property type="evidence" value="ECO:0000318"/>
    <property type="project" value="GO_Central"/>
</dbReference>
<dbReference type="GO" id="GO:0003735">
    <property type="term" value="F:structural constituent of ribosome"/>
    <property type="evidence" value="ECO:0000318"/>
    <property type="project" value="GO_Central"/>
</dbReference>
<dbReference type="GO" id="GO:0006412">
    <property type="term" value="P:translation"/>
    <property type="evidence" value="ECO:0000318"/>
    <property type="project" value="GO_Central"/>
</dbReference>
<dbReference type="CDD" id="cd00349">
    <property type="entry name" value="Ribosomal_L11"/>
    <property type="match status" value="1"/>
</dbReference>
<dbReference type="FunFam" id="1.10.10.250:FF:000001">
    <property type="entry name" value="50S ribosomal protein L11"/>
    <property type="match status" value="1"/>
</dbReference>
<dbReference type="FunFam" id="3.30.1550.10:FF:000001">
    <property type="entry name" value="50S ribosomal protein L11"/>
    <property type="match status" value="1"/>
</dbReference>
<dbReference type="Gene3D" id="1.10.10.250">
    <property type="entry name" value="Ribosomal protein L11, C-terminal domain"/>
    <property type="match status" value="1"/>
</dbReference>
<dbReference type="Gene3D" id="3.30.1550.10">
    <property type="entry name" value="Ribosomal protein L11/L12, N-terminal domain"/>
    <property type="match status" value="1"/>
</dbReference>
<dbReference type="HAMAP" id="MF_00736">
    <property type="entry name" value="Ribosomal_uL11"/>
    <property type="match status" value="1"/>
</dbReference>
<dbReference type="InterPro" id="IPR000911">
    <property type="entry name" value="Ribosomal_uL11"/>
</dbReference>
<dbReference type="InterPro" id="IPR006519">
    <property type="entry name" value="Ribosomal_uL11_bac-typ"/>
</dbReference>
<dbReference type="InterPro" id="IPR020783">
    <property type="entry name" value="Ribosomal_uL11_C"/>
</dbReference>
<dbReference type="InterPro" id="IPR036769">
    <property type="entry name" value="Ribosomal_uL11_C_sf"/>
</dbReference>
<dbReference type="InterPro" id="IPR020785">
    <property type="entry name" value="Ribosomal_uL11_CS"/>
</dbReference>
<dbReference type="InterPro" id="IPR020784">
    <property type="entry name" value="Ribosomal_uL11_N"/>
</dbReference>
<dbReference type="InterPro" id="IPR036796">
    <property type="entry name" value="Ribosomal_uL11_N_sf"/>
</dbReference>
<dbReference type="NCBIfam" id="TIGR01632">
    <property type="entry name" value="L11_bact"/>
    <property type="match status" value="1"/>
</dbReference>
<dbReference type="PANTHER" id="PTHR11661">
    <property type="entry name" value="60S RIBOSOMAL PROTEIN L12"/>
    <property type="match status" value="1"/>
</dbReference>
<dbReference type="PANTHER" id="PTHR11661:SF1">
    <property type="entry name" value="LARGE RIBOSOMAL SUBUNIT PROTEIN UL11M"/>
    <property type="match status" value="1"/>
</dbReference>
<dbReference type="Pfam" id="PF00298">
    <property type="entry name" value="Ribosomal_L11"/>
    <property type="match status" value="1"/>
</dbReference>
<dbReference type="Pfam" id="PF03946">
    <property type="entry name" value="Ribosomal_L11_N"/>
    <property type="match status" value="1"/>
</dbReference>
<dbReference type="SMART" id="SM00649">
    <property type="entry name" value="RL11"/>
    <property type="match status" value="1"/>
</dbReference>
<dbReference type="SUPFAM" id="SSF54747">
    <property type="entry name" value="Ribosomal L11/L12e N-terminal domain"/>
    <property type="match status" value="1"/>
</dbReference>
<dbReference type="SUPFAM" id="SSF46906">
    <property type="entry name" value="Ribosomal protein L11, C-terminal domain"/>
    <property type="match status" value="1"/>
</dbReference>
<dbReference type="PROSITE" id="PS00359">
    <property type="entry name" value="RIBOSOMAL_L11"/>
    <property type="match status" value="1"/>
</dbReference>
<reference key="1">
    <citation type="journal article" date="2003" name="DNA Res.">
        <title>Complete genome structure of Gloeobacter violaceus PCC 7421, a cyanobacterium that lacks thylakoids.</title>
        <authorList>
            <person name="Nakamura Y."/>
            <person name="Kaneko T."/>
            <person name="Sato S."/>
            <person name="Mimuro M."/>
            <person name="Miyashita H."/>
            <person name="Tsuchiya T."/>
            <person name="Sasamoto S."/>
            <person name="Watanabe A."/>
            <person name="Kawashima K."/>
            <person name="Kishida Y."/>
            <person name="Kiyokawa C."/>
            <person name="Kohara M."/>
            <person name="Matsumoto M."/>
            <person name="Matsuno A."/>
            <person name="Nakazaki N."/>
            <person name="Shimpo S."/>
            <person name="Takeuchi C."/>
            <person name="Yamada M."/>
            <person name="Tabata S."/>
        </authorList>
    </citation>
    <scope>NUCLEOTIDE SEQUENCE [LARGE SCALE GENOMIC DNA]</scope>
    <source>
        <strain>ATCC 29082 / PCC 7421</strain>
    </source>
</reference>
<feature type="chain" id="PRO_0000104292" description="Large ribosomal subunit protein uL11">
    <location>
        <begin position="1"/>
        <end position="141"/>
    </location>
</feature>